<feature type="chain" id="PRO_0000247045" description="Peflin">
    <location>
        <begin position="1"/>
        <end position="284"/>
    </location>
</feature>
<feature type="repeat" description="1" evidence="9">
    <location>
        <begin position="21"/>
        <end position="29"/>
    </location>
</feature>
<feature type="repeat" description="2" evidence="9">
    <location>
        <begin position="31"/>
        <end position="39"/>
    </location>
</feature>
<feature type="repeat" description="3" evidence="9">
    <location>
        <begin position="41"/>
        <end position="49"/>
    </location>
</feature>
<feature type="repeat" description="4" evidence="9">
    <location>
        <begin position="50"/>
        <end position="58"/>
    </location>
</feature>
<feature type="repeat" description="5" evidence="9">
    <location>
        <begin position="59"/>
        <end position="67"/>
    </location>
</feature>
<feature type="repeat" description="6" evidence="9">
    <location>
        <begin position="76"/>
        <end position="84"/>
    </location>
</feature>
<feature type="repeat" description="7" evidence="9">
    <location>
        <begin position="85"/>
        <end position="92"/>
    </location>
</feature>
<feature type="repeat" description="8" evidence="9">
    <location>
        <begin position="93"/>
        <end position="100"/>
    </location>
</feature>
<feature type="repeat" description="9" evidence="9">
    <location>
        <begin position="101"/>
        <end position="109"/>
    </location>
</feature>
<feature type="domain" description="EF-hand 1" evidence="2">
    <location>
        <begin position="114"/>
        <end position="149"/>
    </location>
</feature>
<feature type="domain" description="EF-hand 2" evidence="2">
    <location>
        <begin position="155"/>
        <end position="183"/>
    </location>
</feature>
<feature type="domain" description="EF-hand 3" evidence="2">
    <location>
        <begin position="181"/>
        <end position="216"/>
    </location>
</feature>
<feature type="domain" description="EF-hand 4" evidence="9">
    <location>
        <begin position="217"/>
        <end position="253"/>
    </location>
</feature>
<feature type="domain" description="EF-hand 5" evidence="9">
    <location>
        <begin position="254"/>
        <end position="283"/>
    </location>
</feature>
<feature type="region of interest" description="Disordered" evidence="3">
    <location>
        <begin position="1"/>
        <end position="111"/>
    </location>
</feature>
<feature type="region of interest" description="9 X 9 AA approximate tandem repeat of [AP]-P-G-G-P-Y-G-G-P-P" evidence="9">
    <location>
        <begin position="21"/>
        <end position="109"/>
    </location>
</feature>
<feature type="region of interest" description="Required for interaction with PDCD6" evidence="5">
    <location>
        <begin position="204"/>
        <end position="284"/>
    </location>
</feature>
<feature type="compositionally biased region" description="Low complexity" evidence="3">
    <location>
        <begin position="8"/>
        <end position="26"/>
    </location>
</feature>
<feature type="compositionally biased region" description="Gly residues" evidence="3">
    <location>
        <begin position="34"/>
        <end position="50"/>
    </location>
</feature>
<feature type="compositionally biased region" description="Low complexity" evidence="3">
    <location>
        <begin position="65"/>
        <end position="75"/>
    </location>
</feature>
<feature type="compositionally biased region" description="Gly residues" evidence="3">
    <location>
        <begin position="76"/>
        <end position="90"/>
    </location>
</feature>
<feature type="binding site" evidence="2">
    <location>
        <position position="127"/>
    </location>
    <ligand>
        <name>Ca(2+)</name>
        <dbReference type="ChEBI" id="CHEBI:29108"/>
        <label>1</label>
    </ligand>
</feature>
<feature type="binding site" evidence="2">
    <location>
        <position position="129"/>
    </location>
    <ligand>
        <name>Ca(2+)</name>
        <dbReference type="ChEBI" id="CHEBI:29108"/>
        <label>1</label>
    </ligand>
</feature>
<feature type="binding site" evidence="2">
    <location>
        <position position="131"/>
    </location>
    <ligand>
        <name>Ca(2+)</name>
        <dbReference type="ChEBI" id="CHEBI:29108"/>
        <label>1</label>
    </ligand>
</feature>
<feature type="binding site" evidence="2">
    <location>
        <position position="133"/>
    </location>
    <ligand>
        <name>Ca(2+)</name>
        <dbReference type="ChEBI" id="CHEBI:29108"/>
        <label>1</label>
    </ligand>
</feature>
<feature type="binding site" evidence="2">
    <location>
        <position position="138"/>
    </location>
    <ligand>
        <name>Ca(2+)</name>
        <dbReference type="ChEBI" id="CHEBI:29108"/>
        <label>1</label>
    </ligand>
</feature>
<feature type="binding site" evidence="2">
    <location>
        <position position="194"/>
    </location>
    <ligand>
        <name>Ca(2+)</name>
        <dbReference type="ChEBI" id="CHEBI:29108"/>
        <label>2</label>
    </ligand>
</feature>
<feature type="binding site" evidence="2">
    <location>
        <position position="196"/>
    </location>
    <ligand>
        <name>Ca(2+)</name>
        <dbReference type="ChEBI" id="CHEBI:29108"/>
        <label>2</label>
    </ligand>
</feature>
<feature type="binding site" evidence="2">
    <location>
        <position position="198"/>
    </location>
    <ligand>
        <name>Ca(2+)</name>
        <dbReference type="ChEBI" id="CHEBI:29108"/>
        <label>2</label>
    </ligand>
</feature>
<feature type="binding site" evidence="2">
    <location>
        <position position="200"/>
    </location>
    <ligand>
        <name>Ca(2+)</name>
        <dbReference type="ChEBI" id="CHEBI:29108"/>
        <label>2</label>
    </ligand>
</feature>
<feature type="binding site" evidence="2">
    <location>
        <position position="205"/>
    </location>
    <ligand>
        <name>Ca(2+)</name>
        <dbReference type="ChEBI" id="CHEBI:29108"/>
        <label>2</label>
    </ligand>
</feature>
<feature type="cross-link" description="Glycyl lysine isopeptide (Lys-Gly) (interchain with G-Cter in ubiquitin)" evidence="10">
    <location>
        <position position="137"/>
    </location>
</feature>
<feature type="mutagenesis site" description="Decreased ubiquitination by the BCR(KLHL12) E3 ubiquitin ligase complex." evidence="6">
    <original>K</original>
    <variation>R</variation>
    <location>
        <position position="137"/>
    </location>
</feature>
<feature type="mutagenesis site" description="Does not affect ubiquitination by the BCR(KLHL12) E3 ubiquitin ligase complex." evidence="6">
    <original>K</original>
    <variation>R</variation>
    <location>
        <position position="165"/>
    </location>
</feature>
<feature type="mutagenesis site" description="Does not affect ubiquitination by the BCR(KLHL12) E3 ubiquitin ligase complex." evidence="6">
    <original>K</original>
    <variation>R</variation>
    <location>
        <position position="167"/>
    </location>
</feature>
<accession>Q9UBV8</accession>
<proteinExistence type="evidence at protein level"/>
<organism>
    <name type="scientific">Homo sapiens</name>
    <name type="common">Human</name>
    <dbReference type="NCBI Taxonomy" id="9606"/>
    <lineage>
        <taxon>Eukaryota</taxon>
        <taxon>Metazoa</taxon>
        <taxon>Chordata</taxon>
        <taxon>Craniata</taxon>
        <taxon>Vertebrata</taxon>
        <taxon>Euteleostomi</taxon>
        <taxon>Mammalia</taxon>
        <taxon>Eutheria</taxon>
        <taxon>Euarchontoglires</taxon>
        <taxon>Primates</taxon>
        <taxon>Haplorrhini</taxon>
        <taxon>Catarrhini</taxon>
        <taxon>Hominidae</taxon>
        <taxon>Homo</taxon>
    </lineage>
</organism>
<reference key="1">
    <citation type="journal article" date="1999" name="Biochem. Biophys. Res. Commun.">
        <title>Peflin, a novel member of the five-EF-hand-protein family, is similar to the apoptosis-linked gene 2 (ALG-2) protein but possesses nonapeptide repeats in the N-terminal hydrophobic region.</title>
        <authorList>
            <person name="Kitaura Y."/>
            <person name="Watanabe M."/>
            <person name="Satoh H."/>
            <person name="Kawai T."/>
            <person name="Hitomi K."/>
            <person name="Maki M."/>
        </authorList>
    </citation>
    <scope>NUCLEOTIDE SEQUENCE [MRNA]</scope>
</reference>
<reference key="2">
    <citation type="submission" date="1998-10" db="EMBL/GenBank/DDBJ databases">
        <title>A putative calcium binding protein that has five EF-hand motifs.</title>
        <authorList>
            <person name="Shibata M."/>
            <person name="Noguchi J."/>
        </authorList>
    </citation>
    <scope>NUCLEOTIDE SEQUENCE [MRNA]</scope>
    <source>
        <tissue>Spleen</tissue>
    </source>
</reference>
<reference key="3">
    <citation type="journal article" date="2003" name="Genome Res.">
        <title>The secreted protein discovery initiative (SPDI), a large-scale effort to identify novel human secreted and transmembrane proteins: a bioinformatics assessment.</title>
        <authorList>
            <person name="Clark H.F."/>
            <person name="Gurney A.L."/>
            <person name="Abaya E."/>
            <person name="Baker K."/>
            <person name="Baldwin D.T."/>
            <person name="Brush J."/>
            <person name="Chen J."/>
            <person name="Chow B."/>
            <person name="Chui C."/>
            <person name="Crowley C."/>
            <person name="Currell B."/>
            <person name="Deuel B."/>
            <person name="Dowd P."/>
            <person name="Eaton D."/>
            <person name="Foster J.S."/>
            <person name="Grimaldi C."/>
            <person name="Gu Q."/>
            <person name="Hass P.E."/>
            <person name="Heldens S."/>
            <person name="Huang A."/>
            <person name="Kim H.S."/>
            <person name="Klimowski L."/>
            <person name="Jin Y."/>
            <person name="Johnson S."/>
            <person name="Lee J."/>
            <person name="Lewis L."/>
            <person name="Liao D."/>
            <person name="Mark M.R."/>
            <person name="Robbie E."/>
            <person name="Sanchez C."/>
            <person name="Schoenfeld J."/>
            <person name="Seshagiri S."/>
            <person name="Simmons L."/>
            <person name="Singh J."/>
            <person name="Smith V."/>
            <person name="Stinson J."/>
            <person name="Vagts A."/>
            <person name="Vandlen R.L."/>
            <person name="Watanabe C."/>
            <person name="Wieand D."/>
            <person name="Woods K."/>
            <person name="Xie M.-H."/>
            <person name="Yansura D.G."/>
            <person name="Yi S."/>
            <person name="Yu G."/>
            <person name="Yuan J."/>
            <person name="Zhang M."/>
            <person name="Zhang Z."/>
            <person name="Goddard A.D."/>
            <person name="Wood W.I."/>
            <person name="Godowski P.J."/>
            <person name="Gray A.M."/>
        </authorList>
    </citation>
    <scope>NUCLEOTIDE SEQUENCE [LARGE SCALE MRNA]</scope>
</reference>
<reference key="4">
    <citation type="journal article" date="2004" name="Nat. Genet.">
        <title>Complete sequencing and characterization of 21,243 full-length human cDNAs.</title>
        <authorList>
            <person name="Ota T."/>
            <person name="Suzuki Y."/>
            <person name="Nishikawa T."/>
            <person name="Otsuki T."/>
            <person name="Sugiyama T."/>
            <person name="Irie R."/>
            <person name="Wakamatsu A."/>
            <person name="Hayashi K."/>
            <person name="Sato H."/>
            <person name="Nagai K."/>
            <person name="Kimura K."/>
            <person name="Makita H."/>
            <person name="Sekine M."/>
            <person name="Obayashi M."/>
            <person name="Nishi T."/>
            <person name="Shibahara T."/>
            <person name="Tanaka T."/>
            <person name="Ishii S."/>
            <person name="Yamamoto J."/>
            <person name="Saito K."/>
            <person name="Kawai Y."/>
            <person name="Isono Y."/>
            <person name="Nakamura Y."/>
            <person name="Nagahari K."/>
            <person name="Murakami K."/>
            <person name="Yasuda T."/>
            <person name="Iwayanagi T."/>
            <person name="Wagatsuma M."/>
            <person name="Shiratori A."/>
            <person name="Sudo H."/>
            <person name="Hosoiri T."/>
            <person name="Kaku Y."/>
            <person name="Kodaira H."/>
            <person name="Kondo H."/>
            <person name="Sugawara M."/>
            <person name="Takahashi M."/>
            <person name="Kanda K."/>
            <person name="Yokoi T."/>
            <person name="Furuya T."/>
            <person name="Kikkawa E."/>
            <person name="Omura Y."/>
            <person name="Abe K."/>
            <person name="Kamihara K."/>
            <person name="Katsuta N."/>
            <person name="Sato K."/>
            <person name="Tanikawa M."/>
            <person name="Yamazaki M."/>
            <person name="Ninomiya K."/>
            <person name="Ishibashi T."/>
            <person name="Yamashita H."/>
            <person name="Murakawa K."/>
            <person name="Fujimori K."/>
            <person name="Tanai H."/>
            <person name="Kimata M."/>
            <person name="Watanabe M."/>
            <person name="Hiraoka S."/>
            <person name="Chiba Y."/>
            <person name="Ishida S."/>
            <person name="Ono Y."/>
            <person name="Takiguchi S."/>
            <person name="Watanabe S."/>
            <person name="Yosida M."/>
            <person name="Hotuta T."/>
            <person name="Kusano J."/>
            <person name="Kanehori K."/>
            <person name="Takahashi-Fujii A."/>
            <person name="Hara H."/>
            <person name="Tanase T.-O."/>
            <person name="Nomura Y."/>
            <person name="Togiya S."/>
            <person name="Komai F."/>
            <person name="Hara R."/>
            <person name="Takeuchi K."/>
            <person name="Arita M."/>
            <person name="Imose N."/>
            <person name="Musashino K."/>
            <person name="Yuuki H."/>
            <person name="Oshima A."/>
            <person name="Sasaki N."/>
            <person name="Aotsuka S."/>
            <person name="Yoshikawa Y."/>
            <person name="Matsunawa H."/>
            <person name="Ichihara T."/>
            <person name="Shiohata N."/>
            <person name="Sano S."/>
            <person name="Moriya S."/>
            <person name="Momiyama H."/>
            <person name="Satoh N."/>
            <person name="Takami S."/>
            <person name="Terashima Y."/>
            <person name="Suzuki O."/>
            <person name="Nakagawa S."/>
            <person name="Senoh A."/>
            <person name="Mizoguchi H."/>
            <person name="Goto Y."/>
            <person name="Shimizu F."/>
            <person name="Wakebe H."/>
            <person name="Hishigaki H."/>
            <person name="Watanabe T."/>
            <person name="Sugiyama A."/>
            <person name="Takemoto M."/>
            <person name="Kawakami B."/>
            <person name="Yamazaki M."/>
            <person name="Watanabe K."/>
            <person name="Kumagai A."/>
            <person name="Itakura S."/>
            <person name="Fukuzumi Y."/>
            <person name="Fujimori Y."/>
            <person name="Komiyama M."/>
            <person name="Tashiro H."/>
            <person name="Tanigami A."/>
            <person name="Fujiwara T."/>
            <person name="Ono T."/>
            <person name="Yamada K."/>
            <person name="Fujii Y."/>
            <person name="Ozaki K."/>
            <person name="Hirao M."/>
            <person name="Ohmori Y."/>
            <person name="Kawabata A."/>
            <person name="Hikiji T."/>
            <person name="Kobatake N."/>
            <person name="Inagaki H."/>
            <person name="Ikema Y."/>
            <person name="Okamoto S."/>
            <person name="Okitani R."/>
            <person name="Kawakami T."/>
            <person name="Noguchi S."/>
            <person name="Itoh T."/>
            <person name="Shigeta K."/>
            <person name="Senba T."/>
            <person name="Matsumura K."/>
            <person name="Nakajima Y."/>
            <person name="Mizuno T."/>
            <person name="Morinaga M."/>
            <person name="Sasaki M."/>
            <person name="Togashi T."/>
            <person name="Oyama M."/>
            <person name="Hata H."/>
            <person name="Watanabe M."/>
            <person name="Komatsu T."/>
            <person name="Mizushima-Sugano J."/>
            <person name="Satoh T."/>
            <person name="Shirai Y."/>
            <person name="Takahashi Y."/>
            <person name="Nakagawa K."/>
            <person name="Okumura K."/>
            <person name="Nagase T."/>
            <person name="Nomura N."/>
            <person name="Kikuchi H."/>
            <person name="Masuho Y."/>
            <person name="Yamashita R."/>
            <person name="Nakai K."/>
            <person name="Yada T."/>
            <person name="Nakamura Y."/>
            <person name="Ohara O."/>
            <person name="Isogai T."/>
            <person name="Sugano S."/>
        </authorList>
    </citation>
    <scope>NUCLEOTIDE SEQUENCE [LARGE SCALE MRNA]</scope>
</reference>
<reference key="5">
    <citation type="submission" date="2004-06" db="EMBL/GenBank/DDBJ databases">
        <title>Cloning of human full open reading frames in Gateway(TM) system entry vector (pDONR201).</title>
        <authorList>
            <person name="Ebert L."/>
            <person name="Schick M."/>
            <person name="Neubert P."/>
            <person name="Schatten R."/>
            <person name="Henze S."/>
            <person name="Korn B."/>
        </authorList>
    </citation>
    <scope>NUCLEOTIDE SEQUENCE [LARGE SCALE MRNA]</scope>
</reference>
<reference key="6">
    <citation type="journal article" date="2004" name="Genome Res.">
        <title>The status, quality, and expansion of the NIH full-length cDNA project: the Mammalian Gene Collection (MGC).</title>
        <authorList>
            <consortium name="The MGC Project Team"/>
        </authorList>
    </citation>
    <scope>NUCLEOTIDE SEQUENCE [LARGE SCALE MRNA]</scope>
    <source>
        <tissue>Prostate</tissue>
        <tissue>Skin</tissue>
    </source>
</reference>
<reference key="7">
    <citation type="journal article" date="2001" name="J. Biol. Chem.">
        <title>Peflin and ALG-2, members of the penta-EF-hand protein family, form a heterodimer that dissociates in a Ca2+-dependent manner.</title>
        <authorList>
            <person name="Kitaura Y."/>
            <person name="Matsumoto S."/>
            <person name="Satoh H."/>
            <person name="Hitomi K."/>
            <person name="Maki M."/>
        </authorList>
    </citation>
    <scope>FUNCTION</scope>
    <scope>SUBCELLULAR LOCATION</scope>
    <scope>INTERACTION WITH PDCD6</scope>
</reference>
<reference key="8">
    <citation type="journal article" date="2002" name="Arch. Biochem. Biophys.">
        <title>Both ALG-2 and peflin, penta-EF-hand (PEF) proteins, are stabilized by dimerization through their fifth EF-hand regions.</title>
        <authorList>
            <person name="Kitaura Y."/>
            <person name="Satoh H."/>
            <person name="Takahashi H."/>
            <person name="Shibata H."/>
            <person name="Maki M."/>
        </authorList>
    </citation>
    <scope>INTERACTION WITH PDCD6</scope>
</reference>
<reference key="9">
    <citation type="journal article" date="2011" name="BMC Syst. Biol.">
        <title>Initial characterization of the human central proteome.</title>
        <authorList>
            <person name="Burkard T.R."/>
            <person name="Planyavsky M."/>
            <person name="Kaupe I."/>
            <person name="Breitwieser F.P."/>
            <person name="Buerckstuemmer T."/>
            <person name="Bennett K.L."/>
            <person name="Superti-Furga G."/>
            <person name="Colinge J."/>
        </authorList>
    </citation>
    <scope>IDENTIFICATION BY MASS SPECTROMETRY [LARGE SCALE ANALYSIS]</scope>
</reference>
<reference key="10">
    <citation type="journal article" date="2016" name="Cell">
        <title>Regulation of the CUL3 ubiquitin ligase by a calcium-dependent co-adaptor.</title>
        <authorList>
            <person name="McGourty C.A."/>
            <person name="Akopian D."/>
            <person name="Walsh C."/>
            <person name="Gorur A."/>
            <person name="Werner A."/>
            <person name="Schekman R."/>
            <person name="Bautista D."/>
            <person name="Rape M."/>
        </authorList>
    </citation>
    <scope>FUNCTION</scope>
    <scope>SUBCELLULAR LOCATION</scope>
    <scope>INTERACTION WITH PDCD6</scope>
    <scope>UBIQUITINATION AT LYS-137</scope>
    <scope>MUTAGENESIS OF LYS-137; LYS-165 AND LYS-167</scope>
</reference>
<name>PEF1_HUMAN</name>
<sequence>MASYPYRQGCPGAAGQAPGAPPGSYYPGPPNSGGQYGSGLPPGGGYGGPAPGGPYGPPAGGGPYGHPNPGMFPSGTPGGPYGGAAPGGPYGQPPPSSYGAQQPGLYGQGGAPPNVDPEAYSWFQSVDSDHSGYISMKELKQALVNCNWSSFNDETCLMMINMFDKTKSGRIDVYGFSALWKFIQQWKNLFQQYDRDRSGSISYTELQQALSQMGYNLSPQFTQLLVSRYCPRSANPAMQLDRFIQVCTQLQVLTEAFREKDTAVQGNIRLSFEDFVTMTASRML</sequence>
<dbReference type="EMBL" id="AB026628">
    <property type="protein sequence ID" value="BAA85163.1"/>
    <property type="molecule type" value="mRNA"/>
</dbReference>
<dbReference type="EMBL" id="AB018357">
    <property type="protein sequence ID" value="BAA84922.1"/>
    <property type="molecule type" value="mRNA"/>
</dbReference>
<dbReference type="EMBL" id="AY359011">
    <property type="protein sequence ID" value="AAQ89370.1"/>
    <property type="molecule type" value="mRNA"/>
</dbReference>
<dbReference type="EMBL" id="AK001420">
    <property type="protein sequence ID" value="BAA91680.1"/>
    <property type="molecule type" value="mRNA"/>
</dbReference>
<dbReference type="EMBL" id="CR542139">
    <property type="protein sequence ID" value="CAG46936.1"/>
    <property type="molecule type" value="mRNA"/>
</dbReference>
<dbReference type="EMBL" id="BC002773">
    <property type="protein sequence ID" value="AAH02773.1"/>
    <property type="molecule type" value="mRNA"/>
</dbReference>
<dbReference type="EMBL" id="BC012561">
    <property type="protein sequence ID" value="AAH12561.1"/>
    <property type="molecule type" value="mRNA"/>
</dbReference>
<dbReference type="CCDS" id="CCDS345.1"/>
<dbReference type="RefSeq" id="NP_036524.1">
    <property type="nucleotide sequence ID" value="NM_012392.4"/>
</dbReference>
<dbReference type="PDB" id="8RBH">
    <property type="method" value="X-ray"/>
    <property type="resolution" value="1.88 A"/>
    <property type="chains" value="C/D=15-25"/>
</dbReference>
<dbReference type="PDBsum" id="8RBH"/>
<dbReference type="SMR" id="Q9UBV8"/>
<dbReference type="BioGRID" id="139275">
    <property type="interactions" value="105"/>
</dbReference>
<dbReference type="CORUM" id="Q9UBV8"/>
<dbReference type="FunCoup" id="Q9UBV8">
    <property type="interactions" value="949"/>
</dbReference>
<dbReference type="IntAct" id="Q9UBV8">
    <property type="interactions" value="57"/>
</dbReference>
<dbReference type="MINT" id="Q9UBV8"/>
<dbReference type="STRING" id="9606.ENSP00000362807"/>
<dbReference type="ChEMBL" id="CHEMBL4105771"/>
<dbReference type="DrugBank" id="DB11093">
    <property type="generic name" value="Calcium citrate"/>
</dbReference>
<dbReference type="DrugBank" id="DB11348">
    <property type="generic name" value="Calcium Phosphate"/>
</dbReference>
<dbReference type="DrugBank" id="DB14481">
    <property type="generic name" value="Calcium phosphate dihydrate"/>
</dbReference>
<dbReference type="GlyGen" id="Q9UBV8">
    <property type="glycosylation" value="1 site, 1 O-linked glycan (1 site)"/>
</dbReference>
<dbReference type="iPTMnet" id="Q9UBV8"/>
<dbReference type="PhosphoSitePlus" id="Q9UBV8"/>
<dbReference type="SwissPalm" id="Q9UBV8"/>
<dbReference type="BioMuta" id="PEF1"/>
<dbReference type="DMDM" id="74761895"/>
<dbReference type="REPRODUCTION-2DPAGE" id="IPI00018235"/>
<dbReference type="jPOST" id="Q9UBV8"/>
<dbReference type="MassIVE" id="Q9UBV8"/>
<dbReference type="PaxDb" id="9606-ENSP00000362807"/>
<dbReference type="PeptideAtlas" id="Q9UBV8"/>
<dbReference type="ProteomicsDB" id="84082"/>
<dbReference type="Pumba" id="Q9UBV8"/>
<dbReference type="Antibodypedia" id="31143">
    <property type="antibodies" value="164 antibodies from 29 providers"/>
</dbReference>
<dbReference type="DNASU" id="553115"/>
<dbReference type="Ensembl" id="ENST00000373703.5">
    <property type="protein sequence ID" value="ENSP00000362807.4"/>
    <property type="gene ID" value="ENSG00000162517.13"/>
</dbReference>
<dbReference type="GeneID" id="553115"/>
<dbReference type="KEGG" id="hsa:553115"/>
<dbReference type="MANE-Select" id="ENST00000373703.5">
    <property type="protein sequence ID" value="ENSP00000362807.4"/>
    <property type="RefSeq nucleotide sequence ID" value="NM_012392.4"/>
    <property type="RefSeq protein sequence ID" value="NP_036524.1"/>
</dbReference>
<dbReference type="UCSC" id="uc001bth.3">
    <property type="organism name" value="human"/>
</dbReference>
<dbReference type="AGR" id="HGNC:30009"/>
<dbReference type="CTD" id="553115"/>
<dbReference type="DisGeNET" id="553115"/>
<dbReference type="GeneCards" id="PEF1"/>
<dbReference type="HGNC" id="HGNC:30009">
    <property type="gene designation" value="PEF1"/>
</dbReference>
<dbReference type="HPA" id="ENSG00000162517">
    <property type="expression patterns" value="Low tissue specificity"/>
</dbReference>
<dbReference type="MIM" id="610033">
    <property type="type" value="gene"/>
</dbReference>
<dbReference type="neXtProt" id="NX_Q9UBV8"/>
<dbReference type="OpenTargets" id="ENSG00000162517"/>
<dbReference type="PharmGKB" id="PA142671184"/>
<dbReference type="VEuPathDB" id="HostDB:ENSG00000162517"/>
<dbReference type="eggNOG" id="KOG0037">
    <property type="taxonomic scope" value="Eukaryota"/>
</dbReference>
<dbReference type="GeneTree" id="ENSGT00940000155722"/>
<dbReference type="HOGENOM" id="CLU_051357_1_0_1"/>
<dbReference type="InParanoid" id="Q9UBV8"/>
<dbReference type="OMA" id="YNKSYNP"/>
<dbReference type="OrthoDB" id="10248537at2759"/>
<dbReference type="PAN-GO" id="Q9UBV8">
    <property type="GO annotations" value="1 GO annotation based on evolutionary models"/>
</dbReference>
<dbReference type="PhylomeDB" id="Q9UBV8"/>
<dbReference type="TreeFam" id="TF314682"/>
<dbReference type="PathwayCommons" id="Q9UBV8"/>
<dbReference type="SignaLink" id="Q9UBV8"/>
<dbReference type="BioGRID-ORCS" id="553115">
    <property type="hits" value="97 hits in 1157 CRISPR screens"/>
</dbReference>
<dbReference type="CD-CODE" id="DEE660B4">
    <property type="entry name" value="Stress granule"/>
</dbReference>
<dbReference type="ChiTaRS" id="PEF1">
    <property type="organism name" value="human"/>
</dbReference>
<dbReference type="GeneWiki" id="PEF1"/>
<dbReference type="GenomeRNAi" id="553115"/>
<dbReference type="Pharos" id="Q9UBV8">
    <property type="development level" value="Tbio"/>
</dbReference>
<dbReference type="PRO" id="PR:Q9UBV8"/>
<dbReference type="Proteomes" id="UP000005640">
    <property type="component" value="Chromosome 1"/>
</dbReference>
<dbReference type="RNAct" id="Q9UBV8">
    <property type="molecule type" value="protein"/>
</dbReference>
<dbReference type="Bgee" id="ENSG00000162517">
    <property type="expression patterns" value="Expressed in left lobe of thyroid gland and 201 other cell types or tissues"/>
</dbReference>
<dbReference type="ExpressionAtlas" id="Q9UBV8">
    <property type="expression patterns" value="baseline and differential"/>
</dbReference>
<dbReference type="GO" id="GO:0030127">
    <property type="term" value="C:COPII vesicle coat"/>
    <property type="evidence" value="ECO:0000314"/>
    <property type="project" value="UniProtKB"/>
</dbReference>
<dbReference type="GO" id="GO:0031463">
    <property type="term" value="C:Cul3-RING ubiquitin ligase complex"/>
    <property type="evidence" value="ECO:0000314"/>
    <property type="project" value="GO_Central"/>
</dbReference>
<dbReference type="GO" id="GO:0005737">
    <property type="term" value="C:cytoplasm"/>
    <property type="evidence" value="ECO:0000314"/>
    <property type="project" value="UniProtKB"/>
</dbReference>
<dbReference type="GO" id="GO:0005783">
    <property type="term" value="C:endoplasmic reticulum"/>
    <property type="evidence" value="ECO:0007669"/>
    <property type="project" value="UniProtKB-SubCell"/>
</dbReference>
<dbReference type="GO" id="GO:0070062">
    <property type="term" value="C:extracellular exosome"/>
    <property type="evidence" value="ECO:0007005"/>
    <property type="project" value="UniProtKB"/>
</dbReference>
<dbReference type="GO" id="GO:0005509">
    <property type="term" value="F:calcium ion binding"/>
    <property type="evidence" value="ECO:0000304"/>
    <property type="project" value="ProtInc"/>
</dbReference>
<dbReference type="GO" id="GO:0048306">
    <property type="term" value="F:calcium-dependent protein binding"/>
    <property type="evidence" value="ECO:0000353"/>
    <property type="project" value="UniProtKB"/>
</dbReference>
<dbReference type="GO" id="GO:0042802">
    <property type="term" value="F:identical protein binding"/>
    <property type="evidence" value="ECO:0000353"/>
    <property type="project" value="IntAct"/>
</dbReference>
<dbReference type="GO" id="GO:0046983">
    <property type="term" value="F:protein dimerization activity"/>
    <property type="evidence" value="ECO:0000353"/>
    <property type="project" value="UniProtKB"/>
</dbReference>
<dbReference type="GO" id="GO:0046982">
    <property type="term" value="F:protein heterodimerization activity"/>
    <property type="evidence" value="ECO:0000353"/>
    <property type="project" value="UniProtKB"/>
</dbReference>
<dbReference type="GO" id="GO:0003723">
    <property type="term" value="F:RNA binding"/>
    <property type="evidence" value="ECO:0007005"/>
    <property type="project" value="UniProtKB"/>
</dbReference>
<dbReference type="GO" id="GO:1990756">
    <property type="term" value="F:ubiquitin-like ligase-substrate adaptor activity"/>
    <property type="evidence" value="ECO:0000315"/>
    <property type="project" value="GO_Central"/>
</dbReference>
<dbReference type="GO" id="GO:0048208">
    <property type="term" value="P:COPII vesicle coating"/>
    <property type="evidence" value="ECO:0000315"/>
    <property type="project" value="UniProtKB"/>
</dbReference>
<dbReference type="GO" id="GO:0006888">
    <property type="term" value="P:endoplasmic reticulum to Golgi vesicle-mediated transport"/>
    <property type="evidence" value="ECO:0000315"/>
    <property type="project" value="UniProtKB"/>
</dbReference>
<dbReference type="GO" id="GO:0014032">
    <property type="term" value="P:neural crest cell development"/>
    <property type="evidence" value="ECO:0000315"/>
    <property type="project" value="UniProtKB"/>
</dbReference>
<dbReference type="GO" id="GO:0014029">
    <property type="term" value="P:neural crest formation"/>
    <property type="evidence" value="ECO:0000315"/>
    <property type="project" value="UniProtKB"/>
</dbReference>
<dbReference type="GO" id="GO:1902527">
    <property type="term" value="P:positive regulation of protein monoubiquitination"/>
    <property type="evidence" value="ECO:0000315"/>
    <property type="project" value="UniProtKB"/>
</dbReference>
<dbReference type="GO" id="GO:0051592">
    <property type="term" value="P:response to calcium ion"/>
    <property type="evidence" value="ECO:0000353"/>
    <property type="project" value="UniProtKB"/>
</dbReference>
<dbReference type="CDD" id="cd16184">
    <property type="entry name" value="EFh_PEF_peflin"/>
    <property type="match status" value="1"/>
</dbReference>
<dbReference type="FunFam" id="1.10.238.10:FF:000139">
    <property type="entry name" value="Peflin isoform 1"/>
    <property type="match status" value="1"/>
</dbReference>
<dbReference type="Gene3D" id="1.10.238.10">
    <property type="entry name" value="EF-hand"/>
    <property type="match status" value="1"/>
</dbReference>
<dbReference type="InterPro" id="IPR011992">
    <property type="entry name" value="EF-hand-dom_pair"/>
</dbReference>
<dbReference type="InterPro" id="IPR018247">
    <property type="entry name" value="EF_Hand_1_Ca_BS"/>
</dbReference>
<dbReference type="InterPro" id="IPR002048">
    <property type="entry name" value="EF_hand_dom"/>
</dbReference>
<dbReference type="InterPro" id="IPR051426">
    <property type="entry name" value="Peflin/Sorcin_CaBP"/>
</dbReference>
<dbReference type="PANTHER" id="PTHR46212">
    <property type="entry name" value="PEFLIN"/>
    <property type="match status" value="1"/>
</dbReference>
<dbReference type="PANTHER" id="PTHR46212:SF10">
    <property type="entry name" value="PEFLIN"/>
    <property type="match status" value="1"/>
</dbReference>
<dbReference type="Pfam" id="PF13405">
    <property type="entry name" value="EF-hand_6"/>
    <property type="match status" value="1"/>
</dbReference>
<dbReference type="Pfam" id="PF13499">
    <property type="entry name" value="EF-hand_7"/>
    <property type="match status" value="1"/>
</dbReference>
<dbReference type="SMART" id="SM00054">
    <property type="entry name" value="EFh"/>
    <property type="match status" value="3"/>
</dbReference>
<dbReference type="SUPFAM" id="SSF47473">
    <property type="entry name" value="EF-hand"/>
    <property type="match status" value="1"/>
</dbReference>
<dbReference type="PROSITE" id="PS00018">
    <property type="entry name" value="EF_HAND_1"/>
    <property type="match status" value="2"/>
</dbReference>
<dbReference type="PROSITE" id="PS50222">
    <property type="entry name" value="EF_HAND_2"/>
    <property type="match status" value="2"/>
</dbReference>
<protein>
    <recommendedName>
        <fullName evidence="7">Peflin</fullName>
    </recommendedName>
    <alternativeName>
        <fullName evidence="7">PEF protein with a long N-terminal hydrophobic domain</fullName>
    </alternativeName>
    <alternativeName>
        <fullName evidence="11">Penta-EF hand domain-containing protein 1</fullName>
    </alternativeName>
</protein>
<gene>
    <name evidence="11" type="primary">PEF1</name>
    <name type="synonym">ABP32</name>
    <name evidence="8" type="ORF">UNQ1845/PRO3573</name>
</gene>
<comment type="function">
    <text evidence="1 4 6">Calcium-binding protein that acts as an adapter that bridges unrelated proteins or stabilizes weak protein-protein complexes in response to calcium. Together with PDCD6, acts as a calcium-dependent adapter for the BCR(KLHL12) complex, a complex involved in endoplasmic reticulum (ER)-Golgi transport by regulating the size of COPII coats (PubMed:27716508). In response to cytosolic calcium increase, the heterodimer formed with PDCD6 interacts with, and bridges together the BCR(KLHL12) complex and SEC31 (SEC31A or SEC31B), promoting monoubiquitination of SEC31 and subsequent collagen export, which is required for neural crest specification (PubMed:27716508). Its role in the heterodimer formed with PDCD6 is however unclear: some evidence shows that PEF1 and PDCD6 work together and promote association between PDCD6 and SEC31 in presence of calcium (PubMed:27716508). Other reports show that PEF1 dissociates from PDCD6 in presence of calcium, and may act as a negative regulator of PDCD6 (PubMed:11278427). Also acts as a negative regulator of ER-Golgi transport; possibly by inhibiting interaction between PDCD6 and SEC31 (By similarity).</text>
</comment>
<comment type="subunit">
    <text evidence="4 5 6">Heterodimer; heterodimerizes (via the EF-hand 5) with PDCD6 (PubMed:11278427, PubMed:11883899, PubMed:27716508). Dissociates from PDCD6 in presence of calcium (PubMed:11278427).</text>
</comment>
<comment type="interaction">
    <interactant intactId="EBI-724639">
        <id>Q9UBV8</id>
    </interactant>
    <interactant intactId="EBI-357530">
        <id>Q9ULX6</id>
        <label>AKAP8L</label>
    </interactant>
    <organismsDiffer>false</organismsDiffer>
    <experiments>3</experiments>
</comment>
<comment type="interaction">
    <interactant intactId="EBI-724639">
        <id>Q9UBV8</id>
    </interactant>
    <interactant intactId="EBI-12102070">
        <id>Q9NXR5-2</id>
        <label>ANKRD10</label>
    </interactant>
    <organismsDiffer>false</organismsDiffer>
    <experiments>3</experiments>
</comment>
<comment type="interaction">
    <interactant intactId="EBI-724639">
        <id>Q9UBV8</id>
    </interactant>
    <interactant intactId="EBI-2949658">
        <id>O95429</id>
        <label>BAG4</label>
    </interactant>
    <organismsDiffer>false</organismsDiffer>
    <experiments>5</experiments>
</comment>
<comment type="interaction">
    <interactant intactId="EBI-724639">
        <id>Q9UBV8</id>
    </interactant>
    <interactant intactId="EBI-953896">
        <id>Q9NP55</id>
        <label>BPIFA1</label>
    </interactant>
    <organismsDiffer>false</organismsDiffer>
    <experiments>3</experiments>
</comment>
<comment type="interaction">
    <interactant intactId="EBI-724639">
        <id>Q9UBV8</id>
    </interactant>
    <interactant intactId="EBI-739580">
        <id>Q13137</id>
        <label>CALCOCO2</label>
    </interactant>
    <organismsDiffer>false</organismsDiffer>
    <experiments>4</experiments>
</comment>
<comment type="interaction">
    <interactant intactId="EBI-724639">
        <id>Q9UBV8</id>
    </interactant>
    <interactant intactId="EBI-747776">
        <id>Q53EZ4</id>
        <label>CEP55</label>
    </interactant>
    <organismsDiffer>false</organismsDiffer>
    <experiments>6</experiments>
</comment>
<comment type="interaction">
    <interactant intactId="EBI-724639">
        <id>Q9UBV8</id>
    </interactant>
    <interactant intactId="EBI-718615">
        <id>Q9H5F2</id>
        <label>CFAP68</label>
    </interactant>
    <organismsDiffer>false</organismsDiffer>
    <experiments>3</experiments>
</comment>
<comment type="interaction">
    <interactant intactId="EBI-724639">
        <id>Q9UBV8</id>
    </interactant>
    <interactant intactId="EBI-1188472">
        <id>P78358</id>
        <label>CTAG1B</label>
    </interactant>
    <organismsDiffer>false</organismsDiffer>
    <experiments>3</experiments>
</comment>
<comment type="interaction">
    <interactant intactId="EBI-724639">
        <id>Q9UBV8</id>
    </interactant>
    <interactant intactId="EBI-724310">
        <id>Q15038</id>
        <label>DAZAP2</label>
    </interactant>
    <organismsDiffer>false</organismsDiffer>
    <experiments>6</experiments>
</comment>
<comment type="interaction">
    <interactant intactId="EBI-724639">
        <id>Q9UBV8</id>
    </interactant>
    <interactant intactId="EBI-12012124">
        <id>Q04637-9</id>
        <label>EIF4G1</label>
    </interactant>
    <organismsDiffer>false</organismsDiffer>
    <experiments>3</experiments>
</comment>
<comment type="interaction">
    <interactant intactId="EBI-724639">
        <id>Q9UBV8</id>
    </interactant>
    <interactant intactId="EBI-739737">
        <id>Q01844</id>
        <label>EWSR1</label>
    </interactant>
    <organismsDiffer>false</organismsDiffer>
    <experiments>3</experiments>
</comment>
<comment type="interaction">
    <interactant intactId="EBI-724639">
        <id>Q9UBV8</id>
    </interactant>
    <interactant intactId="EBI-11978259">
        <id>Q92567-2</id>
        <label>FAM168A</label>
    </interactant>
    <organismsDiffer>false</organismsDiffer>
    <experiments>3</experiments>
</comment>
<comment type="interaction">
    <interactant intactId="EBI-724639">
        <id>Q9UBV8</id>
    </interactant>
    <interactant intactId="EBI-8468543">
        <id>Q6PJQ5</id>
        <label>FOXR2</label>
    </interactant>
    <organismsDiffer>false</organismsDiffer>
    <experiments>7</experiments>
</comment>
<comment type="interaction">
    <interactant intactId="EBI-724639">
        <id>Q9UBV8</id>
    </interactant>
    <interactant intactId="EBI-10329202">
        <id>Q9Y5R4</id>
        <label>HEMK1</label>
    </interactant>
    <organismsDiffer>false</organismsDiffer>
    <experiments>3</experiments>
</comment>
<comment type="interaction">
    <interactant intactId="EBI-724639">
        <id>Q9UBV8</id>
    </interactant>
    <interactant intactId="EBI-740220">
        <id>O14964</id>
        <label>HGS</label>
    </interactant>
    <organismsDiffer>false</organismsDiffer>
    <experiments>3</experiments>
</comment>
<comment type="interaction">
    <interactant intactId="EBI-724639">
        <id>Q9UBV8</id>
    </interactant>
    <interactant intactId="EBI-14748124">
        <id>Q4G0P3-6</id>
        <label>HYDIN</label>
    </interactant>
    <organismsDiffer>false</organismsDiffer>
    <experiments>3</experiments>
</comment>
<comment type="interaction">
    <interactant intactId="EBI-724639">
        <id>Q9UBV8</id>
    </interactant>
    <interactant intactId="EBI-6509505">
        <id>Q0VD86</id>
        <label>INCA1</label>
    </interactant>
    <organismsDiffer>false</organismsDiffer>
    <experiments>3</experiments>
</comment>
<comment type="interaction">
    <interactant intactId="EBI-724639">
        <id>Q9UBV8</id>
    </interactant>
    <interactant intactId="EBI-740929">
        <id>Q53G59</id>
        <label>KLHL12</label>
    </interactant>
    <organismsDiffer>false</organismsDiffer>
    <experiments>10</experiments>
</comment>
<comment type="interaction">
    <interactant intactId="EBI-724639">
        <id>Q9UBV8</id>
    </interactant>
    <interactant intactId="EBI-10210845">
        <id>P59990</id>
        <label>KRTAP12-1</label>
    </interactant>
    <organismsDiffer>false</organismsDiffer>
    <experiments>3</experiments>
</comment>
<comment type="interaction">
    <interactant intactId="EBI-724639">
        <id>Q9UBV8</id>
    </interactant>
    <interactant intactId="EBI-11992140">
        <id>Q3LI76</id>
        <label>KRTAP15-1</label>
    </interactant>
    <organismsDiffer>false</organismsDiffer>
    <experiments>3</experiments>
</comment>
<comment type="interaction">
    <interactant intactId="EBI-724639">
        <id>Q9UBV8</id>
    </interactant>
    <interactant intactId="EBI-12811111">
        <id>Q8IUB9</id>
        <label>KRTAP19-1</label>
    </interactant>
    <organismsDiffer>false</organismsDiffer>
    <experiments>3</experiments>
</comment>
<comment type="interaction">
    <interactant intactId="EBI-724639">
        <id>Q9UBV8</id>
    </interactant>
    <interactant intactId="EBI-394558">
        <id>Q71SY5</id>
        <label>MED25</label>
    </interactant>
    <organismsDiffer>false</organismsDiffer>
    <experiments>3</experiments>
</comment>
<comment type="interaction">
    <interactant intactId="EBI-724639">
        <id>Q9UBV8</id>
    </interactant>
    <interactant intactId="EBI-10174029">
        <id>A6NJ78-4</id>
        <label>METTL15</label>
    </interactant>
    <organismsDiffer>false</organismsDiffer>
    <experiments>3</experiments>
</comment>
<comment type="interaction">
    <interactant intactId="EBI-724639">
        <id>Q9UBV8</id>
    </interactant>
    <interactant intactId="EBI-352915">
        <id>O75340</id>
        <label>PDCD6</label>
    </interactant>
    <organismsDiffer>false</organismsDiffer>
    <experiments>12</experiments>
</comment>
<comment type="interaction">
    <interactant intactId="EBI-724639">
        <id>Q9UBV8</id>
    </interactant>
    <interactant intactId="EBI-724639">
        <id>Q9UBV8</id>
        <label>PEF1</label>
    </interactant>
    <organismsDiffer>false</organismsDiffer>
    <experiments>3</experiments>
</comment>
<comment type="interaction">
    <interactant intactId="EBI-724639">
        <id>Q9UBV8</id>
    </interactant>
    <interactant intactId="EBI-12320085">
        <id>O95486-2</id>
        <label>SEC24A</label>
    </interactant>
    <organismsDiffer>false</organismsDiffer>
    <experiments>3</experiments>
</comment>
<comment type="interaction">
    <interactant intactId="EBI-724639">
        <id>Q9UBV8</id>
    </interactant>
    <interactant intactId="EBI-12275818">
        <id>Q53HV7-2</id>
        <label>SMUG1</label>
    </interactant>
    <organismsDiffer>false</organismsDiffer>
    <experiments>3</experiments>
</comment>
<comment type="interaction">
    <interactant intactId="EBI-724639">
        <id>Q9UBV8</id>
    </interactant>
    <interactant intactId="EBI-12288855">
        <id>Q5JUK2</id>
        <label>SOHLH1</label>
    </interactant>
    <organismsDiffer>false</organismsDiffer>
    <experiments>3</experiments>
</comment>
<comment type="interaction">
    <interactant intactId="EBI-724639">
        <id>Q9UBV8</id>
    </interactant>
    <interactant intactId="EBI-11959123">
        <id>Q99932-2</id>
        <label>SPAG8</label>
    </interactant>
    <organismsDiffer>false</organismsDiffer>
    <experiments>3</experiments>
</comment>
<comment type="interaction">
    <interactant intactId="EBI-724639">
        <id>Q9UBV8</id>
    </interactant>
    <interactant intactId="EBI-742688">
        <id>Q9NZD8</id>
        <label>SPG21</label>
    </interactant>
    <organismsDiffer>false</organismsDiffer>
    <experiments>6</experiments>
</comment>
<comment type="interaction">
    <interactant intactId="EBI-724639">
        <id>Q9UBV8</id>
    </interactant>
    <interactant intactId="EBI-12843506">
        <id>Q8IWL8</id>
        <label>STH</label>
    </interactant>
    <organismsDiffer>false</organismsDiffer>
    <experiments>3</experiments>
</comment>
<comment type="interaction">
    <interactant intactId="EBI-724639">
        <id>Q9UBV8</id>
    </interactant>
    <interactant intactId="EBI-357061">
        <id>Q92734</id>
        <label>TFG</label>
    </interactant>
    <organismsDiffer>false</organismsDiffer>
    <experiments>6</experiments>
</comment>
<comment type="interaction">
    <interactant intactId="EBI-724639">
        <id>Q9UBV8</id>
    </interactant>
    <interactant intactId="EBI-2559305">
        <id>A5D8V6</id>
        <label>VPS37C</label>
    </interactant>
    <organismsDiffer>false</organismsDiffer>
    <experiments>3</experiments>
</comment>
<comment type="interaction">
    <interactant intactId="EBI-724639">
        <id>Q9UBV8</id>
    </interactant>
    <interactant intactId="EBI-12040603">
        <id>Q9NZC7-5</id>
        <label>WWOX</label>
    </interactant>
    <organismsDiffer>false</organismsDiffer>
    <experiments>3</experiments>
</comment>
<comment type="interaction">
    <interactant intactId="EBI-724639">
        <id>Q9UBV8</id>
    </interactant>
    <interactant intactId="EBI-11963196">
        <id>Q15915</id>
        <label>ZIC1</label>
    </interactant>
    <organismsDiffer>false</organismsDiffer>
    <experiments>3</experiments>
</comment>
<comment type="subcellular location">
    <subcellularLocation>
        <location evidence="4">Cytoplasm</location>
    </subcellularLocation>
    <subcellularLocation>
        <location evidence="1">Endoplasmic reticulum</location>
    </subcellularLocation>
    <subcellularLocation>
        <location evidence="4">Membrane</location>
        <topology evidence="4">Peripheral membrane protein</topology>
    </subcellularLocation>
    <subcellularLocation>
        <location evidence="6">Cytoplasmic vesicle</location>
        <location evidence="6">COPII-coated vesicle membrane</location>
        <topology evidence="9">Peripheral membrane protein</topology>
    </subcellularLocation>
    <text evidence="1 4">Membrane-associated in the presence of Ca(2+) (PubMed:11278427). Localizes to endoplasmic reticulum exit site (ERES) (By similarity).</text>
</comment>
<comment type="PTM">
    <text evidence="6">Ubiquitinated by the BCR(KLHL12) E3 ubiquitin ligase complex.</text>
</comment>
<evidence type="ECO:0000250" key="1">
    <source>
        <dbReference type="UniProtKB" id="Q641Z8"/>
    </source>
</evidence>
<evidence type="ECO:0000255" key="2">
    <source>
        <dbReference type="PROSITE-ProRule" id="PRU00448"/>
    </source>
</evidence>
<evidence type="ECO:0000256" key="3">
    <source>
        <dbReference type="SAM" id="MobiDB-lite"/>
    </source>
</evidence>
<evidence type="ECO:0000269" key="4">
    <source>
    </source>
</evidence>
<evidence type="ECO:0000269" key="5">
    <source>
    </source>
</evidence>
<evidence type="ECO:0000269" key="6">
    <source>
    </source>
</evidence>
<evidence type="ECO:0000303" key="7">
    <source>
    </source>
</evidence>
<evidence type="ECO:0000303" key="8">
    <source>
    </source>
</evidence>
<evidence type="ECO:0000305" key="9"/>
<evidence type="ECO:0000305" key="10">
    <source>
    </source>
</evidence>
<evidence type="ECO:0000312" key="11">
    <source>
        <dbReference type="HGNC" id="HGNC:30009"/>
    </source>
</evidence>
<keyword id="KW-0002">3D-structure</keyword>
<keyword id="KW-0106">Calcium</keyword>
<keyword id="KW-0963">Cytoplasm</keyword>
<keyword id="KW-0968">Cytoplasmic vesicle</keyword>
<keyword id="KW-0256">Endoplasmic reticulum</keyword>
<keyword id="KW-1017">Isopeptide bond</keyword>
<keyword id="KW-0472">Membrane</keyword>
<keyword id="KW-0479">Metal-binding</keyword>
<keyword id="KW-1267">Proteomics identification</keyword>
<keyword id="KW-1185">Reference proteome</keyword>
<keyword id="KW-0677">Repeat</keyword>
<keyword id="KW-0832">Ubl conjugation</keyword>